<dbReference type="InParanoid" id="P14450"/>
<dbReference type="Proteomes" id="UP000011712">
    <property type="component" value="Unplaced"/>
</dbReference>
<dbReference type="GO" id="GO:0005576">
    <property type="term" value="C:extracellular region"/>
    <property type="evidence" value="ECO:0007669"/>
    <property type="project" value="UniProtKB-SubCell"/>
</dbReference>
<dbReference type="GO" id="GO:0002250">
    <property type="term" value="P:adaptive immune response"/>
    <property type="evidence" value="ECO:0007669"/>
    <property type="project" value="UniProtKB-KW"/>
</dbReference>
<dbReference type="GO" id="GO:0007596">
    <property type="term" value="P:blood coagulation"/>
    <property type="evidence" value="ECO:0007669"/>
    <property type="project" value="UniProtKB-KW"/>
</dbReference>
<dbReference type="GO" id="GO:0045087">
    <property type="term" value="P:innate immune response"/>
    <property type="evidence" value="ECO:0007669"/>
    <property type="project" value="UniProtKB-KW"/>
</dbReference>
<organism>
    <name type="scientific">Felis catus</name>
    <name type="common">Cat</name>
    <name type="synonym">Felis silvestris catus</name>
    <dbReference type="NCBI Taxonomy" id="9685"/>
    <lineage>
        <taxon>Eukaryota</taxon>
        <taxon>Metazoa</taxon>
        <taxon>Chordata</taxon>
        <taxon>Craniata</taxon>
        <taxon>Vertebrata</taxon>
        <taxon>Euteleostomi</taxon>
        <taxon>Mammalia</taxon>
        <taxon>Eutheria</taxon>
        <taxon>Laurasiatheria</taxon>
        <taxon>Carnivora</taxon>
        <taxon>Feliformia</taxon>
        <taxon>Felidae</taxon>
        <taxon>Felinae</taxon>
        <taxon>Felis</taxon>
    </lineage>
</organism>
<accession>P14450</accession>
<sequence length="16" mass="1620">GDVQEGEFIAEGGGVR</sequence>
<reference key="1">
    <citation type="journal article" date="1965" name="Acta Chem. Scand.">
        <title>Studies on fibrinopeptides from mammals.</title>
        <authorList>
            <person name="Blombaeck B."/>
            <person name="Blombaeck M."/>
            <person name="Grondahl N.J."/>
        </authorList>
    </citation>
    <scope>PROTEIN SEQUENCE</scope>
</reference>
<name>FIBA_FELCA</name>
<comment type="function">
    <text evidence="1">Cleaved by the protease thrombin to yield monomers which, together with fibrinogen beta (FGB) and fibrinogen gamma (FGG), polymerize to form an insoluble fibrin matrix. Fibrin has a major function in hemostasis as one of the primary components of blood clots. In addition, functions during the early stages of wound repair to stabilize the lesion and guide cell migration during re-epithelialization. Was originally thought to be essential for platelet aggregation, based on in vitro studies using anticoagulated blood. However, subsequent studies have shown that it is not absolutely required for thrombus formation in vivo. Enhances expression of SELP in activated platelets via an ITGB3-dependent pathway. Maternal fibrinogen is essential for successful pregnancy. Fibrin deposition is also associated with infection, where it protects against IFNG-mediated hemorrhage. May also facilitate the immune response via both innate and T-cell mediated pathways.</text>
</comment>
<comment type="subunit">
    <text evidence="2">Heterohexamer; disulfide linked. Contains 2 sets of 3 non-identical chains (alpha, beta and gamma). The 2 heterotrimers are in head to head conformation with the N-termini in a small central domain (By similarity).</text>
</comment>
<comment type="subcellular location">
    <subcellularLocation>
        <location>Secreted</location>
    </subcellularLocation>
</comment>
<comment type="domain">
    <text evidence="2">A long coiled coil structure formed by 3 polypeptide chains connects the central nodule to the C-terminal domains (distal nodules). The long C-terminal ends of the alpha chains fold back, contributing a fourth strand to the coiled coil structure.</text>
</comment>
<comment type="PTM">
    <text>Conversion of fibrinogen to fibrin is triggered by thrombin, which cleaves fibrinopeptides A and B from alpha and beta chains, and thus exposes the N-terminal polymerization sites responsible for the formation of the soft clot. The soft clot is converted into the hard clot by factor XIIIA which catalyzes the epsilon-(gamma-glutamyl)lysine cross-linking between gamma chains (stronger) and between alpha chains (weaker) of different monomers.</text>
</comment>
<comment type="PTM">
    <text>Forms F13A-mediated cross-links between a glutamine and the epsilon-amino group of a lysine residue, forming fibronectin-fibrinogen heteropolymers.</text>
</comment>
<protein>
    <recommendedName>
        <fullName>Fibrinogen alpha chain</fullName>
    </recommendedName>
    <component>
        <recommendedName>
            <fullName>Fibrinopeptide A</fullName>
        </recommendedName>
    </component>
</protein>
<feature type="peptide" id="PRO_0000009019" description="Fibrinopeptide A">
    <location>
        <begin position="1"/>
        <end position="16"/>
    </location>
</feature>
<feature type="non-terminal residue">
    <location>
        <position position="16"/>
    </location>
</feature>
<gene>
    <name type="primary">FGA</name>
</gene>
<keyword id="KW-1064">Adaptive immunity</keyword>
<keyword id="KW-0094">Blood coagulation</keyword>
<keyword id="KW-0175">Coiled coil</keyword>
<keyword id="KW-0903">Direct protein sequencing</keyword>
<keyword id="KW-1015">Disulfide bond</keyword>
<keyword id="KW-0356">Hemostasis</keyword>
<keyword id="KW-0391">Immunity</keyword>
<keyword id="KW-0399">Innate immunity</keyword>
<keyword id="KW-1185">Reference proteome</keyword>
<keyword id="KW-0964">Secreted</keyword>
<proteinExistence type="evidence at protein level"/>
<evidence type="ECO:0000250" key="1">
    <source>
        <dbReference type="UniProtKB" id="E9PV24"/>
    </source>
</evidence>
<evidence type="ECO:0000250" key="2">
    <source>
        <dbReference type="UniProtKB" id="P02671"/>
    </source>
</evidence>